<accession>Q9ZZW4</accession>
<name>Q0142_YEAST</name>
<dbReference type="EMBL" id="KP263414">
    <property type="status" value="NOT_ANNOTATED_CDS"/>
    <property type="molecule type" value="Genomic_DNA"/>
</dbReference>
<dbReference type="PIR" id="S78672">
    <property type="entry name" value="S78672"/>
</dbReference>
<dbReference type="STRING" id="4932.Q0142"/>
<dbReference type="PaxDb" id="4932-Q0142"/>
<dbReference type="EnsemblFungi" id="Q0142_mRNA">
    <property type="protein sequence ID" value="Q0142"/>
    <property type="gene ID" value="Q0142"/>
</dbReference>
<dbReference type="AGR" id="SGD:S000007276"/>
<dbReference type="SGD" id="S000007276">
    <property type="gene designation" value="Q0142"/>
</dbReference>
<dbReference type="HOGENOM" id="CLU_2980860_0_0_1"/>
<dbReference type="InParanoid" id="Q9ZZW4"/>
<dbReference type="Proteomes" id="UP000002311">
    <property type="component" value="Mitochondrion"/>
</dbReference>
<dbReference type="RNAct" id="Q9ZZW4">
    <property type="molecule type" value="protein"/>
</dbReference>
<dbReference type="GO" id="GO:0005739">
    <property type="term" value="C:mitochondrion"/>
    <property type="evidence" value="ECO:0007669"/>
    <property type="project" value="UniProtKB-SubCell"/>
</dbReference>
<sequence>MTGSGTPPSREVNTYYMTMTMTMTMIMIMTMTMNIHFNNNNNNNINMNSRRMYLFILM</sequence>
<reference key="1">
    <citation type="journal article" date="1998" name="FEBS Lett.">
        <title>The complete sequence of the mitochondrial genome of Saccharomyces cerevisiae.</title>
        <authorList>
            <person name="Foury F."/>
            <person name="Roganti T."/>
            <person name="Lecrenier N."/>
            <person name="Purnelle B."/>
        </authorList>
    </citation>
    <scope>NUCLEOTIDE SEQUENCE [LARGE SCALE GENOMIC DNA]</scope>
    <source>
        <strain>ATCC 96604 / S288c / FY1679</strain>
    </source>
</reference>
<reference key="2">
    <citation type="journal article" date="2014" name="G3 (Bethesda)">
        <title>The reference genome sequence of Saccharomyces cerevisiae: Then and now.</title>
        <authorList>
            <person name="Engel S.R."/>
            <person name="Dietrich F.S."/>
            <person name="Fisk D.G."/>
            <person name="Binkley G."/>
            <person name="Balakrishnan R."/>
            <person name="Costanzo M.C."/>
            <person name="Dwight S.S."/>
            <person name="Hitz B.C."/>
            <person name="Karra K."/>
            <person name="Nash R.S."/>
            <person name="Weng S."/>
            <person name="Wong E.D."/>
            <person name="Lloyd P."/>
            <person name="Skrzypek M.S."/>
            <person name="Miyasato S.R."/>
            <person name="Simison M."/>
            <person name="Cherry J.M."/>
        </authorList>
    </citation>
    <scope>GENOME REANNOTATION</scope>
    <source>
        <strain>ATCC 96604 / S288c / FY1679</strain>
    </source>
</reference>
<geneLocation type="mitochondrion"/>
<protein>
    <recommendedName>
        <fullName>Putative uncharacterized protein Q0142, mitochondrial</fullName>
    </recommendedName>
</protein>
<comment type="subcellular location">
    <subcellularLocation>
        <location evidence="1">Mitochondrion</location>
    </subcellularLocation>
</comment>
<comment type="caution">
    <text evidence="1">Product of a dubious gene prediction.</text>
</comment>
<feature type="chain" id="PRO_0000299682" description="Putative uncharacterized protein Q0142, mitochondrial">
    <location>
        <begin position="1"/>
        <end position="58"/>
    </location>
</feature>
<evidence type="ECO:0000305" key="1"/>
<gene>
    <name type="ordered locus">Q0142</name>
    <name type="ORF">ORF9</name>
</gene>
<keyword id="KW-0496">Mitochondrion</keyword>
<keyword id="KW-1185">Reference proteome</keyword>
<proteinExistence type="uncertain"/>
<organism>
    <name type="scientific">Saccharomyces cerevisiae (strain ATCC 204508 / S288c)</name>
    <name type="common">Baker's yeast</name>
    <dbReference type="NCBI Taxonomy" id="559292"/>
    <lineage>
        <taxon>Eukaryota</taxon>
        <taxon>Fungi</taxon>
        <taxon>Dikarya</taxon>
        <taxon>Ascomycota</taxon>
        <taxon>Saccharomycotina</taxon>
        <taxon>Saccharomycetes</taxon>
        <taxon>Saccharomycetales</taxon>
        <taxon>Saccharomycetaceae</taxon>
        <taxon>Saccharomyces</taxon>
    </lineage>
</organism>